<feature type="chain" id="PRO_0000314204" description="UPF0262 protein Pden_1958">
    <location>
        <begin position="1"/>
        <end position="162"/>
    </location>
</feature>
<feature type="region of interest" description="Disordered" evidence="2">
    <location>
        <begin position="1"/>
        <end position="22"/>
    </location>
</feature>
<reference key="1">
    <citation type="submission" date="2006-12" db="EMBL/GenBank/DDBJ databases">
        <title>Complete sequence of chromosome 1 of Paracoccus denitrificans PD1222.</title>
        <authorList>
            <person name="Copeland A."/>
            <person name="Lucas S."/>
            <person name="Lapidus A."/>
            <person name="Barry K."/>
            <person name="Detter J.C."/>
            <person name="Glavina del Rio T."/>
            <person name="Hammon N."/>
            <person name="Israni S."/>
            <person name="Dalin E."/>
            <person name="Tice H."/>
            <person name="Pitluck S."/>
            <person name="Munk A.C."/>
            <person name="Brettin T."/>
            <person name="Bruce D."/>
            <person name="Han C."/>
            <person name="Tapia R."/>
            <person name="Gilna P."/>
            <person name="Schmutz J."/>
            <person name="Larimer F."/>
            <person name="Land M."/>
            <person name="Hauser L."/>
            <person name="Kyrpides N."/>
            <person name="Lykidis A."/>
            <person name="Spiro S."/>
            <person name="Richardson D.J."/>
            <person name="Moir J.W.B."/>
            <person name="Ferguson S.J."/>
            <person name="van Spanning R.J.M."/>
            <person name="Richardson P."/>
        </authorList>
    </citation>
    <scope>NUCLEOTIDE SEQUENCE [LARGE SCALE GENOMIC DNA]</scope>
    <source>
        <strain>Pd 1222</strain>
    </source>
</reference>
<name>Y1958_PARDP</name>
<gene>
    <name type="ordered locus">Pden_1958</name>
</gene>
<sequence>MSQSANRLCRIDIDDSALPPPSPEIEQDRRVAVFDLLEDNSFTLPGREGQDVPPGPYALALAVREKRLVFDIATESGSKVAEFHLSLGPFRQTVKDYFQICTSYFDAVKRLPPAQIEAIDMARRGIHNEGARTLQERLEGKAEVDIDTARRLFTLICALVPG</sequence>
<protein>
    <recommendedName>
        <fullName evidence="1">UPF0262 protein Pden_1958</fullName>
    </recommendedName>
</protein>
<keyword id="KW-1185">Reference proteome</keyword>
<proteinExistence type="inferred from homology"/>
<accession>A1B3F6</accession>
<organism>
    <name type="scientific">Paracoccus denitrificans (strain Pd 1222)</name>
    <dbReference type="NCBI Taxonomy" id="318586"/>
    <lineage>
        <taxon>Bacteria</taxon>
        <taxon>Pseudomonadati</taxon>
        <taxon>Pseudomonadota</taxon>
        <taxon>Alphaproteobacteria</taxon>
        <taxon>Rhodobacterales</taxon>
        <taxon>Paracoccaceae</taxon>
        <taxon>Paracoccus</taxon>
    </lineage>
</organism>
<comment type="similarity">
    <text evidence="1">Belongs to the UPF0262 family.</text>
</comment>
<evidence type="ECO:0000255" key="1">
    <source>
        <dbReference type="HAMAP-Rule" id="MF_00678"/>
    </source>
</evidence>
<evidence type="ECO:0000256" key="2">
    <source>
        <dbReference type="SAM" id="MobiDB-lite"/>
    </source>
</evidence>
<dbReference type="EMBL" id="CP000489">
    <property type="protein sequence ID" value="ABL70050.1"/>
    <property type="molecule type" value="Genomic_DNA"/>
</dbReference>
<dbReference type="RefSeq" id="WP_011748247.1">
    <property type="nucleotide sequence ID" value="NC_008686.1"/>
</dbReference>
<dbReference type="STRING" id="318586.Pden_1958"/>
<dbReference type="EnsemblBacteria" id="ABL70050">
    <property type="protein sequence ID" value="ABL70050"/>
    <property type="gene ID" value="Pden_1958"/>
</dbReference>
<dbReference type="GeneID" id="93450358"/>
<dbReference type="KEGG" id="pde:Pden_1958"/>
<dbReference type="eggNOG" id="COG5328">
    <property type="taxonomic scope" value="Bacteria"/>
</dbReference>
<dbReference type="HOGENOM" id="CLU_112904_0_0_5"/>
<dbReference type="OrthoDB" id="9798434at2"/>
<dbReference type="Proteomes" id="UP000000361">
    <property type="component" value="Chromosome 1"/>
</dbReference>
<dbReference type="HAMAP" id="MF_00678">
    <property type="entry name" value="UPF0262"/>
    <property type="match status" value="1"/>
</dbReference>
<dbReference type="InterPro" id="IPR008321">
    <property type="entry name" value="UCP032146"/>
</dbReference>
<dbReference type="NCBIfam" id="NF002769">
    <property type="entry name" value="PRK02853.1"/>
    <property type="match status" value="1"/>
</dbReference>
<dbReference type="Pfam" id="PF06793">
    <property type="entry name" value="UPF0262"/>
    <property type="match status" value="1"/>
</dbReference>
<dbReference type="PIRSF" id="PIRSF032146">
    <property type="entry name" value="UCP032146"/>
    <property type="match status" value="1"/>
</dbReference>